<accession>Q0HSW6</accession>
<sequence>MSLDISQFPVLAQANTPNELRQLPQALLPQLADELREFLLKSVGMSSGHFASGLGTVELTVALHYVYNTPFDRLIWDVGHQAYPHKILTGRRDRMHTIRQKNGLHPFPWREESEYDTFSVGHSGTSISAALAMAVAAEKEQAGRKVVAVIGDGAMTGGMVFEAMNHAGDLHNDMLMVLNDNEMSISENVGALNNHLAQLMSGRLYTTIRESSKKVLKGMPVIKEMAKRTEEHLKGMVVPGTLFEELGFNYIGPIDGHDVDALVETLRNMRSLKGPQVLHIMTKKGRGYEPAEKDPIGWHAVPKFDPSQFKKPATKPGLPTFSQVFGKWLCDIAEQDEKVLGITPAMREGSGMVEFSQRFPKQYFDAAIAEQHAVTLGAGFACEGFKPVVAIYSTFLQRGYDQLIHDVALQRLPVLFAIDRGGIVGADGPTHQGAFDLSFMRCIPNMVIMAPSDENECRQMLYTGYCYDAGPSAVRYPRGSATGATQVEAMTALPIGKGVIKRLGKRIAMLNFGTTLAAALTAAESLDATVVDMRFVKPLDVDLVKEMAQTHDVLVTVEENAIMGGAGSGVLELLQKLKMPKPVLQIGLPDEFIKHGSPEEVTHDLQLDAEGMLAQINAFLAD</sequence>
<keyword id="KW-0414">Isoprene biosynthesis</keyword>
<keyword id="KW-0460">Magnesium</keyword>
<keyword id="KW-0479">Metal-binding</keyword>
<keyword id="KW-0784">Thiamine biosynthesis</keyword>
<keyword id="KW-0786">Thiamine pyrophosphate</keyword>
<keyword id="KW-0808">Transferase</keyword>
<dbReference type="EC" id="2.2.1.7" evidence="1"/>
<dbReference type="EMBL" id="CP000444">
    <property type="protein sequence ID" value="ABI43789.1"/>
    <property type="molecule type" value="Genomic_DNA"/>
</dbReference>
<dbReference type="SMR" id="Q0HSW6"/>
<dbReference type="KEGG" id="shm:Shewmr7_2804"/>
<dbReference type="HOGENOM" id="CLU_009227_1_4_6"/>
<dbReference type="UniPathway" id="UPA00064">
    <property type="reaction ID" value="UER00091"/>
</dbReference>
<dbReference type="GO" id="GO:0005829">
    <property type="term" value="C:cytosol"/>
    <property type="evidence" value="ECO:0007669"/>
    <property type="project" value="TreeGrafter"/>
</dbReference>
<dbReference type="GO" id="GO:0008661">
    <property type="term" value="F:1-deoxy-D-xylulose-5-phosphate synthase activity"/>
    <property type="evidence" value="ECO:0007669"/>
    <property type="project" value="UniProtKB-UniRule"/>
</dbReference>
<dbReference type="GO" id="GO:0000287">
    <property type="term" value="F:magnesium ion binding"/>
    <property type="evidence" value="ECO:0007669"/>
    <property type="project" value="UniProtKB-UniRule"/>
</dbReference>
<dbReference type="GO" id="GO:0030976">
    <property type="term" value="F:thiamine pyrophosphate binding"/>
    <property type="evidence" value="ECO:0007669"/>
    <property type="project" value="UniProtKB-UniRule"/>
</dbReference>
<dbReference type="GO" id="GO:0052865">
    <property type="term" value="P:1-deoxy-D-xylulose 5-phosphate biosynthetic process"/>
    <property type="evidence" value="ECO:0007669"/>
    <property type="project" value="UniProtKB-UniPathway"/>
</dbReference>
<dbReference type="GO" id="GO:0019288">
    <property type="term" value="P:isopentenyl diphosphate biosynthetic process, methylerythritol 4-phosphate pathway"/>
    <property type="evidence" value="ECO:0007669"/>
    <property type="project" value="TreeGrafter"/>
</dbReference>
<dbReference type="GO" id="GO:0016114">
    <property type="term" value="P:terpenoid biosynthetic process"/>
    <property type="evidence" value="ECO:0007669"/>
    <property type="project" value="UniProtKB-UniRule"/>
</dbReference>
<dbReference type="GO" id="GO:0009228">
    <property type="term" value="P:thiamine biosynthetic process"/>
    <property type="evidence" value="ECO:0007669"/>
    <property type="project" value="UniProtKB-UniRule"/>
</dbReference>
<dbReference type="CDD" id="cd02007">
    <property type="entry name" value="TPP_DXS"/>
    <property type="match status" value="1"/>
</dbReference>
<dbReference type="CDD" id="cd07033">
    <property type="entry name" value="TPP_PYR_DXS_TK_like"/>
    <property type="match status" value="1"/>
</dbReference>
<dbReference type="FunFam" id="3.40.50.920:FF:000002">
    <property type="entry name" value="1-deoxy-D-xylulose-5-phosphate synthase"/>
    <property type="match status" value="1"/>
</dbReference>
<dbReference type="FunFam" id="3.40.50.970:FF:000005">
    <property type="entry name" value="1-deoxy-D-xylulose-5-phosphate synthase"/>
    <property type="match status" value="1"/>
</dbReference>
<dbReference type="Gene3D" id="3.40.50.920">
    <property type="match status" value="1"/>
</dbReference>
<dbReference type="Gene3D" id="3.40.50.970">
    <property type="match status" value="2"/>
</dbReference>
<dbReference type="HAMAP" id="MF_00315">
    <property type="entry name" value="DXP_synth"/>
    <property type="match status" value="1"/>
</dbReference>
<dbReference type="InterPro" id="IPR005477">
    <property type="entry name" value="Dxylulose-5-P_synthase"/>
</dbReference>
<dbReference type="InterPro" id="IPR029061">
    <property type="entry name" value="THDP-binding"/>
</dbReference>
<dbReference type="InterPro" id="IPR009014">
    <property type="entry name" value="Transketo_C/PFOR_II"/>
</dbReference>
<dbReference type="InterPro" id="IPR005475">
    <property type="entry name" value="Transketolase-like_Pyr-bd"/>
</dbReference>
<dbReference type="InterPro" id="IPR020826">
    <property type="entry name" value="Transketolase_BS"/>
</dbReference>
<dbReference type="InterPro" id="IPR033248">
    <property type="entry name" value="Transketolase_C"/>
</dbReference>
<dbReference type="InterPro" id="IPR049557">
    <property type="entry name" value="Transketolase_CS"/>
</dbReference>
<dbReference type="NCBIfam" id="TIGR00204">
    <property type="entry name" value="dxs"/>
    <property type="match status" value="1"/>
</dbReference>
<dbReference type="NCBIfam" id="NF003933">
    <property type="entry name" value="PRK05444.2-2"/>
    <property type="match status" value="1"/>
</dbReference>
<dbReference type="PANTHER" id="PTHR43322">
    <property type="entry name" value="1-D-DEOXYXYLULOSE 5-PHOSPHATE SYNTHASE-RELATED"/>
    <property type="match status" value="1"/>
</dbReference>
<dbReference type="PANTHER" id="PTHR43322:SF5">
    <property type="entry name" value="1-DEOXY-D-XYLULOSE-5-PHOSPHATE SYNTHASE, CHLOROPLASTIC"/>
    <property type="match status" value="1"/>
</dbReference>
<dbReference type="Pfam" id="PF13292">
    <property type="entry name" value="DXP_synthase_N"/>
    <property type="match status" value="1"/>
</dbReference>
<dbReference type="Pfam" id="PF02779">
    <property type="entry name" value="Transket_pyr"/>
    <property type="match status" value="1"/>
</dbReference>
<dbReference type="Pfam" id="PF02780">
    <property type="entry name" value="Transketolase_C"/>
    <property type="match status" value="1"/>
</dbReference>
<dbReference type="SMART" id="SM00861">
    <property type="entry name" value="Transket_pyr"/>
    <property type="match status" value="1"/>
</dbReference>
<dbReference type="SUPFAM" id="SSF52518">
    <property type="entry name" value="Thiamin diphosphate-binding fold (THDP-binding)"/>
    <property type="match status" value="2"/>
</dbReference>
<dbReference type="SUPFAM" id="SSF52922">
    <property type="entry name" value="TK C-terminal domain-like"/>
    <property type="match status" value="1"/>
</dbReference>
<dbReference type="PROSITE" id="PS00801">
    <property type="entry name" value="TRANSKETOLASE_1"/>
    <property type="match status" value="1"/>
</dbReference>
<dbReference type="PROSITE" id="PS00802">
    <property type="entry name" value="TRANSKETOLASE_2"/>
    <property type="match status" value="1"/>
</dbReference>
<organism>
    <name type="scientific">Shewanella sp. (strain MR-7)</name>
    <dbReference type="NCBI Taxonomy" id="60481"/>
    <lineage>
        <taxon>Bacteria</taxon>
        <taxon>Pseudomonadati</taxon>
        <taxon>Pseudomonadota</taxon>
        <taxon>Gammaproteobacteria</taxon>
        <taxon>Alteromonadales</taxon>
        <taxon>Shewanellaceae</taxon>
        <taxon>Shewanella</taxon>
    </lineage>
</organism>
<protein>
    <recommendedName>
        <fullName evidence="1">1-deoxy-D-xylulose-5-phosphate synthase</fullName>
        <ecNumber evidence="1">2.2.1.7</ecNumber>
    </recommendedName>
    <alternativeName>
        <fullName evidence="1">1-deoxyxylulose-5-phosphate synthase</fullName>
        <shortName evidence="1">DXP synthase</shortName>
        <shortName evidence="1">DXPS</shortName>
    </alternativeName>
</protein>
<comment type="function">
    <text evidence="1">Catalyzes the acyloin condensation reaction between C atoms 2 and 3 of pyruvate and glyceraldehyde 3-phosphate to yield 1-deoxy-D-xylulose-5-phosphate (DXP).</text>
</comment>
<comment type="catalytic activity">
    <reaction evidence="1">
        <text>D-glyceraldehyde 3-phosphate + pyruvate + H(+) = 1-deoxy-D-xylulose 5-phosphate + CO2</text>
        <dbReference type="Rhea" id="RHEA:12605"/>
        <dbReference type="ChEBI" id="CHEBI:15361"/>
        <dbReference type="ChEBI" id="CHEBI:15378"/>
        <dbReference type="ChEBI" id="CHEBI:16526"/>
        <dbReference type="ChEBI" id="CHEBI:57792"/>
        <dbReference type="ChEBI" id="CHEBI:59776"/>
        <dbReference type="EC" id="2.2.1.7"/>
    </reaction>
</comment>
<comment type="cofactor">
    <cofactor evidence="1">
        <name>Mg(2+)</name>
        <dbReference type="ChEBI" id="CHEBI:18420"/>
    </cofactor>
    <text evidence="1">Binds 1 Mg(2+) ion per subunit.</text>
</comment>
<comment type="cofactor">
    <cofactor evidence="1">
        <name>thiamine diphosphate</name>
        <dbReference type="ChEBI" id="CHEBI:58937"/>
    </cofactor>
    <text evidence="1">Binds 1 thiamine pyrophosphate per subunit.</text>
</comment>
<comment type="pathway">
    <text evidence="1">Metabolic intermediate biosynthesis; 1-deoxy-D-xylulose 5-phosphate biosynthesis; 1-deoxy-D-xylulose 5-phosphate from D-glyceraldehyde 3-phosphate and pyruvate: step 1/1.</text>
</comment>
<comment type="subunit">
    <text evidence="1">Homodimer.</text>
</comment>
<comment type="similarity">
    <text evidence="1">Belongs to the transketolase family. DXPS subfamily.</text>
</comment>
<reference key="1">
    <citation type="submission" date="2006-08" db="EMBL/GenBank/DDBJ databases">
        <title>Complete sequence of chromosome 1 of Shewanella sp. MR-7.</title>
        <authorList>
            <person name="Copeland A."/>
            <person name="Lucas S."/>
            <person name="Lapidus A."/>
            <person name="Barry K."/>
            <person name="Detter J.C."/>
            <person name="Glavina del Rio T."/>
            <person name="Hammon N."/>
            <person name="Israni S."/>
            <person name="Dalin E."/>
            <person name="Tice H."/>
            <person name="Pitluck S."/>
            <person name="Kiss H."/>
            <person name="Brettin T."/>
            <person name="Bruce D."/>
            <person name="Han C."/>
            <person name="Tapia R."/>
            <person name="Gilna P."/>
            <person name="Schmutz J."/>
            <person name="Larimer F."/>
            <person name="Land M."/>
            <person name="Hauser L."/>
            <person name="Kyrpides N."/>
            <person name="Mikhailova N."/>
            <person name="Nealson K."/>
            <person name="Konstantinidis K."/>
            <person name="Klappenbach J."/>
            <person name="Tiedje J."/>
            <person name="Richardson P."/>
        </authorList>
    </citation>
    <scope>NUCLEOTIDE SEQUENCE [LARGE SCALE GENOMIC DNA]</scope>
    <source>
        <strain>MR-7</strain>
    </source>
</reference>
<evidence type="ECO:0000255" key="1">
    <source>
        <dbReference type="HAMAP-Rule" id="MF_00315"/>
    </source>
</evidence>
<feature type="chain" id="PRO_1000019081" description="1-deoxy-D-xylulose-5-phosphate synthase">
    <location>
        <begin position="1"/>
        <end position="622"/>
    </location>
</feature>
<feature type="binding site" evidence="1">
    <location>
        <position position="80"/>
    </location>
    <ligand>
        <name>thiamine diphosphate</name>
        <dbReference type="ChEBI" id="CHEBI:58937"/>
    </ligand>
</feature>
<feature type="binding site" evidence="1">
    <location>
        <begin position="121"/>
        <end position="123"/>
    </location>
    <ligand>
        <name>thiamine diphosphate</name>
        <dbReference type="ChEBI" id="CHEBI:58937"/>
    </ligand>
</feature>
<feature type="binding site" evidence="1">
    <location>
        <position position="152"/>
    </location>
    <ligand>
        <name>Mg(2+)</name>
        <dbReference type="ChEBI" id="CHEBI:18420"/>
    </ligand>
</feature>
<feature type="binding site" evidence="1">
    <location>
        <begin position="153"/>
        <end position="154"/>
    </location>
    <ligand>
        <name>thiamine diphosphate</name>
        <dbReference type="ChEBI" id="CHEBI:58937"/>
    </ligand>
</feature>
<feature type="binding site" evidence="1">
    <location>
        <position position="181"/>
    </location>
    <ligand>
        <name>Mg(2+)</name>
        <dbReference type="ChEBI" id="CHEBI:18420"/>
    </ligand>
</feature>
<feature type="binding site" evidence="1">
    <location>
        <position position="181"/>
    </location>
    <ligand>
        <name>thiamine diphosphate</name>
        <dbReference type="ChEBI" id="CHEBI:58937"/>
    </ligand>
</feature>
<feature type="binding site" evidence="1">
    <location>
        <position position="288"/>
    </location>
    <ligand>
        <name>thiamine diphosphate</name>
        <dbReference type="ChEBI" id="CHEBI:58937"/>
    </ligand>
</feature>
<feature type="binding site" evidence="1">
    <location>
        <position position="370"/>
    </location>
    <ligand>
        <name>thiamine diphosphate</name>
        <dbReference type="ChEBI" id="CHEBI:58937"/>
    </ligand>
</feature>
<name>DXS_SHESR</name>
<proteinExistence type="inferred from homology"/>
<gene>
    <name evidence="1" type="primary">dxs</name>
    <name type="ordered locus">Shewmr7_2804</name>
</gene>